<protein>
    <recommendedName>
        <fullName>Transcription activator of gluconeogenesis SNOG_12336</fullName>
    </recommendedName>
</protein>
<accession>Q0U7C8</accession>
<reference key="1">
    <citation type="journal article" date="2007" name="Plant Cell">
        <title>Dothideomycete-plant interactions illuminated by genome sequencing and EST analysis of the wheat pathogen Stagonospora nodorum.</title>
        <authorList>
            <person name="Hane J.K."/>
            <person name="Lowe R.G.T."/>
            <person name="Solomon P.S."/>
            <person name="Tan K.-C."/>
            <person name="Schoch C.L."/>
            <person name="Spatafora J.W."/>
            <person name="Crous P.W."/>
            <person name="Kodira C.D."/>
            <person name="Birren B.W."/>
            <person name="Galagan J.E."/>
            <person name="Torriani S.F.F."/>
            <person name="McDonald B.A."/>
            <person name="Oliver R.P."/>
        </authorList>
    </citation>
    <scope>NUCLEOTIDE SEQUENCE [LARGE SCALE GENOMIC DNA]</scope>
    <source>
        <strain>SN15 / ATCC MYA-4574 / FGSC 10173</strain>
    </source>
</reference>
<evidence type="ECO:0000250" key="1"/>
<evidence type="ECO:0000255" key="2">
    <source>
        <dbReference type="PROSITE-ProRule" id="PRU00227"/>
    </source>
</evidence>
<evidence type="ECO:0000256" key="3">
    <source>
        <dbReference type="SAM" id="MobiDB-lite"/>
    </source>
</evidence>
<evidence type="ECO:0000305" key="4"/>
<gene>
    <name type="ORF">SNOG_12336</name>
</gene>
<dbReference type="EMBL" id="CH445346">
    <property type="protein sequence ID" value="EAT80149.2"/>
    <property type="molecule type" value="Genomic_DNA"/>
</dbReference>
<dbReference type="RefSeq" id="XP_001802558.1">
    <property type="nucleotide sequence ID" value="XM_001802506.1"/>
</dbReference>
<dbReference type="SMR" id="Q0U7C8"/>
<dbReference type="FunCoup" id="Q0U7C8">
    <property type="interactions" value="189"/>
</dbReference>
<dbReference type="EnsemblFungi" id="SNOT_12336">
    <property type="protein sequence ID" value="SNOT_12336"/>
    <property type="gene ID" value="SNOG_12336"/>
</dbReference>
<dbReference type="GeneID" id="5979467"/>
<dbReference type="KEGG" id="pno:SNOG_12336"/>
<dbReference type="VEuPathDB" id="FungiDB:JI435_123360"/>
<dbReference type="eggNOG" id="ENOG502R1M5">
    <property type="taxonomic scope" value="Eukaryota"/>
</dbReference>
<dbReference type="HOGENOM" id="CLU_010748_1_0_1"/>
<dbReference type="InParanoid" id="Q0U7C8"/>
<dbReference type="OrthoDB" id="2538135at2759"/>
<dbReference type="Proteomes" id="UP000001055">
    <property type="component" value="Unassembled WGS sequence"/>
</dbReference>
<dbReference type="GO" id="GO:0005634">
    <property type="term" value="C:nucleus"/>
    <property type="evidence" value="ECO:0000318"/>
    <property type="project" value="GO_Central"/>
</dbReference>
<dbReference type="GO" id="GO:0003700">
    <property type="term" value="F:DNA-binding transcription factor activity"/>
    <property type="evidence" value="ECO:0000318"/>
    <property type="project" value="GO_Central"/>
</dbReference>
<dbReference type="GO" id="GO:0000981">
    <property type="term" value="F:DNA-binding transcription factor activity, RNA polymerase II-specific"/>
    <property type="evidence" value="ECO:0007669"/>
    <property type="project" value="InterPro"/>
</dbReference>
<dbReference type="GO" id="GO:0000977">
    <property type="term" value="F:RNA polymerase II transcription regulatory region sequence-specific DNA binding"/>
    <property type="evidence" value="ECO:0000318"/>
    <property type="project" value="GO_Central"/>
</dbReference>
<dbReference type="GO" id="GO:0008270">
    <property type="term" value="F:zinc ion binding"/>
    <property type="evidence" value="ECO:0007669"/>
    <property type="project" value="InterPro"/>
</dbReference>
<dbReference type="GO" id="GO:0009267">
    <property type="term" value="P:cellular response to starvation"/>
    <property type="evidence" value="ECO:0000318"/>
    <property type="project" value="GO_Central"/>
</dbReference>
<dbReference type="GO" id="GO:0006094">
    <property type="term" value="P:gluconeogenesis"/>
    <property type="evidence" value="ECO:0007669"/>
    <property type="project" value="UniProtKB-KW"/>
</dbReference>
<dbReference type="CDD" id="cd00067">
    <property type="entry name" value="GAL4"/>
    <property type="match status" value="1"/>
</dbReference>
<dbReference type="Gene3D" id="4.10.240.10">
    <property type="entry name" value="Zn(2)-C6 fungal-type DNA-binding domain"/>
    <property type="match status" value="1"/>
</dbReference>
<dbReference type="InterPro" id="IPR050335">
    <property type="entry name" value="ERT1_acuK_gluconeogen_tf"/>
</dbReference>
<dbReference type="InterPro" id="IPR056751">
    <property type="entry name" value="PAS_13"/>
</dbReference>
<dbReference type="InterPro" id="IPR036864">
    <property type="entry name" value="Zn2-C6_fun-type_DNA-bd_sf"/>
</dbReference>
<dbReference type="InterPro" id="IPR001138">
    <property type="entry name" value="Zn2Cys6_DnaBD"/>
</dbReference>
<dbReference type="PANTHER" id="PTHR47659:SF1">
    <property type="entry name" value="TRANSCRIPTION ACTIVATOR OF GLUCONEOGENESIS ERT1"/>
    <property type="match status" value="1"/>
</dbReference>
<dbReference type="PANTHER" id="PTHR47659">
    <property type="entry name" value="ZN(II)2CYS6 TRANSCRIPTION FACTOR (EUROFUNG)-RELATED"/>
    <property type="match status" value="1"/>
</dbReference>
<dbReference type="Pfam" id="PF24990">
    <property type="entry name" value="PAS_13"/>
    <property type="match status" value="1"/>
</dbReference>
<dbReference type="SMART" id="SM00066">
    <property type="entry name" value="GAL4"/>
    <property type="match status" value="1"/>
</dbReference>
<dbReference type="SUPFAM" id="SSF57701">
    <property type="entry name" value="Zn2/Cys6 DNA-binding domain"/>
    <property type="match status" value="1"/>
</dbReference>
<dbReference type="PROSITE" id="PS50048">
    <property type="entry name" value="ZN2_CY6_FUNGAL_2"/>
    <property type="match status" value="1"/>
</dbReference>
<sequence>MASPDAEDASPSPEYRSDLDDDMAAEQKTDDGSPSQKSSNGQKPASNAKDPLRPRRKKARRACFACQRAHLTCGDERPCTRCIKRGLQDHCMDGVRKKAKYLHDAPDGALMPGVGGHYPYMNGNRPTPLPSQDTHNVPMAPQGNMYTQAPSGTFYQPPSAQIPLPQAQHGRSFSDQQSPLSPPFSQAHHGPNVNPPSSISQGQPGQMQQFGPLFDPSDPALFNFDISSLNFGNHYGALEFGMLGHMSSAVDAPNDNTMMNAMNQTANMYGPQMAGAYGPNNPNAAMPFAQNSLPAGEWQESQSRQNSMHIHTPTSSATALDHGGHRHDSLNGPHAFAIGQGPSSHSTASPASTDASAFENDNPLSTATFFANTNRGQPQRSPTTNRHHQGNRPPSTALQPIHSNGVRKRHRDTKSIYQGIKKPFDYVKGYHRLFQICHKKFSKSLLAQAQQYLNLYRPVLLSVREEMDTDDLIHQEMGLQRNLMTLQDHFTEVGTPFLICRRSGEIVSCNKEFTILTGWRQDVLLGREPNLNVNLGNSREADESEMSTQTNTTPNLTGQEAETGTPAVNAIQLMDAKSALEYLQNFSELCWQDPHGHAKQRANMLRYQTKADFDRIQEMKANADHKSDAFVKMEGGAVHQGESAMQRLGAKNGMVDCMIWWHIKRDIFEMPVLVCMSVMPVLDKGLQ</sequence>
<organism>
    <name type="scientific">Phaeosphaeria nodorum (strain SN15 / ATCC MYA-4574 / FGSC 10173)</name>
    <name type="common">Glume blotch fungus</name>
    <name type="synonym">Parastagonospora nodorum</name>
    <dbReference type="NCBI Taxonomy" id="321614"/>
    <lineage>
        <taxon>Eukaryota</taxon>
        <taxon>Fungi</taxon>
        <taxon>Dikarya</taxon>
        <taxon>Ascomycota</taxon>
        <taxon>Pezizomycotina</taxon>
        <taxon>Dothideomycetes</taxon>
        <taxon>Pleosporomycetidae</taxon>
        <taxon>Pleosporales</taxon>
        <taxon>Pleosporineae</taxon>
        <taxon>Phaeosphaeriaceae</taxon>
        <taxon>Parastagonospora</taxon>
    </lineage>
</organism>
<comment type="function">
    <text evidence="1">Transcription factor which regulates nonfermentable carbon utilization. Activator of gluconeogenetic genes (By similarity).</text>
</comment>
<comment type="subcellular location">
    <subcellularLocation>
        <location evidence="2">Nucleus</location>
    </subcellularLocation>
</comment>
<comment type="similarity">
    <text evidence="4">Belongs to the ERT1/acuK family.</text>
</comment>
<keyword id="KW-0010">Activator</keyword>
<keyword id="KW-0238">DNA-binding</keyword>
<keyword id="KW-0312">Gluconeogenesis</keyword>
<keyword id="KW-0479">Metal-binding</keyword>
<keyword id="KW-0539">Nucleus</keyword>
<keyword id="KW-0804">Transcription</keyword>
<keyword id="KW-0805">Transcription regulation</keyword>
<keyword id="KW-0862">Zinc</keyword>
<feature type="chain" id="PRO_0000406448" description="Transcription activator of gluconeogenesis SNOG_12336">
    <location>
        <begin position="1"/>
        <end position="687"/>
    </location>
</feature>
<feature type="domain" description="PAS">
    <location>
        <begin position="482"/>
        <end position="553"/>
    </location>
</feature>
<feature type="DNA-binding region" description="Zn(2)-C6 fungal-type" evidence="2">
    <location>
        <begin position="63"/>
        <end position="91"/>
    </location>
</feature>
<feature type="region of interest" description="Disordered" evidence="3">
    <location>
        <begin position="1"/>
        <end position="56"/>
    </location>
</feature>
<feature type="region of interest" description="Disordered" evidence="3">
    <location>
        <begin position="150"/>
        <end position="214"/>
    </location>
</feature>
<feature type="region of interest" description="Disordered" evidence="3">
    <location>
        <begin position="300"/>
        <end position="411"/>
    </location>
</feature>
<feature type="region of interest" description="Disordered" evidence="3">
    <location>
        <begin position="536"/>
        <end position="561"/>
    </location>
</feature>
<feature type="compositionally biased region" description="Polar residues" evidence="3">
    <location>
        <begin position="32"/>
        <end position="45"/>
    </location>
</feature>
<feature type="compositionally biased region" description="Polar residues" evidence="3">
    <location>
        <begin position="150"/>
        <end position="159"/>
    </location>
</feature>
<feature type="compositionally biased region" description="Polar residues" evidence="3">
    <location>
        <begin position="169"/>
        <end position="179"/>
    </location>
</feature>
<feature type="compositionally biased region" description="Low complexity" evidence="3">
    <location>
        <begin position="195"/>
        <end position="212"/>
    </location>
</feature>
<feature type="compositionally biased region" description="Polar residues" evidence="3">
    <location>
        <begin position="300"/>
        <end position="318"/>
    </location>
</feature>
<feature type="compositionally biased region" description="Low complexity" evidence="3">
    <location>
        <begin position="342"/>
        <end position="357"/>
    </location>
</feature>
<feature type="compositionally biased region" description="Polar residues" evidence="3">
    <location>
        <begin position="362"/>
        <end position="384"/>
    </location>
</feature>
<feature type="compositionally biased region" description="Polar residues" evidence="3">
    <location>
        <begin position="392"/>
        <end position="402"/>
    </location>
</feature>
<feature type="compositionally biased region" description="Polar residues" evidence="3">
    <location>
        <begin position="546"/>
        <end position="561"/>
    </location>
</feature>
<name>ACUK_PHANO</name>
<proteinExistence type="inferred from homology"/>